<keyword id="KW-0002">3D-structure</keyword>
<keyword id="KW-1185">Reference proteome</keyword>
<name>Y3325_HALH5</name>
<protein>
    <recommendedName>
        <fullName evidence="1">UPF0309 protein BH3325</fullName>
    </recommendedName>
</protein>
<sequence>MTSSFTDYCKFFNRILSEVQETQEQAIIKGAHLVSEAVMNGGRFYVFGSGHSHMIAEEIYNRAGGLALVTAILPPELMLHERPNKSTYLERIEGLSKSYLKLHQVTNKDVIMIISNSGRNTVPVEMAIESRNIGAKVIAMTSMKHSQKVTSRHKSGKKLYEYADVVLDNGAPVGDAGFQIANSEIYSGATSDSIGCFLAQALIVETLHLLVQQGFEPPVFKSSNVDGADLYNDKIFNEYVKW</sequence>
<feature type="chain" id="PRO_0000068175" description="UPF0309 protein BH3325">
    <location>
        <begin position="1"/>
        <end position="242"/>
    </location>
</feature>
<feature type="domain" description="SIS" evidence="1">
    <location>
        <begin position="34"/>
        <end position="217"/>
    </location>
</feature>
<feature type="helix" evidence="2">
    <location>
        <begin position="5"/>
        <end position="22"/>
    </location>
</feature>
<feature type="helix" evidence="2">
    <location>
        <begin position="24"/>
        <end position="39"/>
    </location>
</feature>
<feature type="strand" evidence="2">
    <location>
        <begin position="44"/>
        <end position="49"/>
    </location>
</feature>
<feature type="helix" evidence="2">
    <location>
        <begin position="50"/>
        <end position="52"/>
    </location>
</feature>
<feature type="helix" evidence="2">
    <location>
        <begin position="53"/>
        <end position="58"/>
    </location>
</feature>
<feature type="strand" evidence="2">
    <location>
        <begin position="60"/>
        <end position="62"/>
    </location>
</feature>
<feature type="strand" evidence="2">
    <location>
        <begin position="69"/>
        <end position="71"/>
    </location>
</feature>
<feature type="helix" evidence="2">
    <location>
        <begin position="75"/>
        <end position="77"/>
    </location>
</feature>
<feature type="strand" evidence="2">
    <location>
        <begin position="78"/>
        <end position="82"/>
    </location>
</feature>
<feature type="helix" evidence="2">
    <location>
        <begin position="85"/>
        <end position="89"/>
    </location>
</feature>
<feature type="helix" evidence="2">
    <location>
        <begin position="95"/>
        <end position="102"/>
    </location>
</feature>
<feature type="strand" evidence="2">
    <location>
        <begin position="110"/>
        <end position="114"/>
    </location>
</feature>
<feature type="helix" evidence="2">
    <location>
        <begin position="121"/>
        <end position="133"/>
    </location>
</feature>
<feature type="strand" evidence="2">
    <location>
        <begin position="136"/>
        <end position="141"/>
    </location>
</feature>
<feature type="helix" evidence="2">
    <location>
        <begin position="143"/>
        <end position="148"/>
    </location>
</feature>
<feature type="helix" evidence="2">
    <location>
        <begin position="159"/>
        <end position="162"/>
    </location>
</feature>
<feature type="strand" evidence="2">
    <location>
        <begin position="164"/>
        <end position="168"/>
    </location>
</feature>
<feature type="strand" evidence="2">
    <location>
        <begin position="181"/>
        <end position="184"/>
    </location>
</feature>
<feature type="helix" evidence="2">
    <location>
        <begin position="191"/>
        <end position="212"/>
    </location>
</feature>
<feature type="helix" evidence="2">
    <location>
        <begin position="228"/>
        <end position="239"/>
    </location>
</feature>
<accession>Q9K7N6</accession>
<comment type="similarity">
    <text evidence="1">Belongs to the UPF0309 family.</text>
</comment>
<dbReference type="EMBL" id="BA000004">
    <property type="protein sequence ID" value="BAB07044.1"/>
    <property type="molecule type" value="Genomic_DNA"/>
</dbReference>
<dbReference type="PIR" id="E84065">
    <property type="entry name" value="E84065"/>
</dbReference>
<dbReference type="RefSeq" id="WP_010899466.1">
    <property type="nucleotide sequence ID" value="NC_002570.2"/>
</dbReference>
<dbReference type="PDB" id="3CVJ">
    <property type="method" value="X-ray"/>
    <property type="resolution" value="2.00 A"/>
    <property type="chains" value="A/B/C/D=1-242"/>
</dbReference>
<dbReference type="PDBsum" id="3CVJ"/>
<dbReference type="SMR" id="Q9K7N6"/>
<dbReference type="STRING" id="272558.gene:10729237"/>
<dbReference type="KEGG" id="bha:BH3325"/>
<dbReference type="eggNOG" id="COG4821">
    <property type="taxonomic scope" value="Bacteria"/>
</dbReference>
<dbReference type="HOGENOM" id="CLU_089975_0_0_9"/>
<dbReference type="OrthoDB" id="9805185at2"/>
<dbReference type="EvolutionaryTrace" id="Q9K7N6"/>
<dbReference type="Proteomes" id="UP000001258">
    <property type="component" value="Chromosome"/>
</dbReference>
<dbReference type="GO" id="GO:0097367">
    <property type="term" value="F:carbohydrate derivative binding"/>
    <property type="evidence" value="ECO:0007669"/>
    <property type="project" value="InterPro"/>
</dbReference>
<dbReference type="GO" id="GO:1901135">
    <property type="term" value="P:carbohydrate derivative metabolic process"/>
    <property type="evidence" value="ECO:0007669"/>
    <property type="project" value="InterPro"/>
</dbReference>
<dbReference type="CDD" id="cd05013">
    <property type="entry name" value="SIS_RpiR"/>
    <property type="match status" value="1"/>
</dbReference>
<dbReference type="Gene3D" id="3.40.50.10490">
    <property type="entry name" value="Glucose-6-phosphate isomerase like protein, domain 1"/>
    <property type="match status" value="1"/>
</dbReference>
<dbReference type="HAMAP" id="MF_01240">
    <property type="entry name" value="UPF0309"/>
    <property type="match status" value="1"/>
</dbReference>
<dbReference type="InterPro" id="IPR035472">
    <property type="entry name" value="RpiR-like_SIS"/>
</dbReference>
<dbReference type="InterPro" id="IPR001347">
    <property type="entry name" value="SIS_dom"/>
</dbReference>
<dbReference type="InterPro" id="IPR046348">
    <property type="entry name" value="SIS_dom_sf"/>
</dbReference>
<dbReference type="InterPro" id="IPR050099">
    <property type="entry name" value="SIS_GmhA/DiaA_subfam"/>
</dbReference>
<dbReference type="InterPro" id="IPR022951">
    <property type="entry name" value="UPF0309"/>
</dbReference>
<dbReference type="NCBIfam" id="NF002805">
    <property type="entry name" value="PRK02947.1"/>
    <property type="match status" value="1"/>
</dbReference>
<dbReference type="PANTHER" id="PTHR30390:SF7">
    <property type="entry name" value="PHOSPHOHEPTOSE ISOMERASE"/>
    <property type="match status" value="1"/>
</dbReference>
<dbReference type="PANTHER" id="PTHR30390">
    <property type="entry name" value="SEDOHEPTULOSE 7-PHOSPHATE ISOMERASE / DNAA INITIATOR-ASSOCIATING FACTOR FOR REPLICATION INITIATION"/>
    <property type="match status" value="1"/>
</dbReference>
<dbReference type="Pfam" id="PF13580">
    <property type="entry name" value="SIS_2"/>
    <property type="match status" value="1"/>
</dbReference>
<dbReference type="SUPFAM" id="SSF53697">
    <property type="entry name" value="SIS domain"/>
    <property type="match status" value="1"/>
</dbReference>
<dbReference type="PROSITE" id="PS51464">
    <property type="entry name" value="SIS"/>
    <property type="match status" value="1"/>
</dbReference>
<gene>
    <name type="ordered locus">BH3325</name>
</gene>
<reference key="1">
    <citation type="journal article" date="2000" name="Nucleic Acids Res.">
        <title>Complete genome sequence of the alkaliphilic bacterium Bacillus halodurans and genomic sequence comparison with Bacillus subtilis.</title>
        <authorList>
            <person name="Takami H."/>
            <person name="Nakasone K."/>
            <person name="Takaki Y."/>
            <person name="Maeno G."/>
            <person name="Sasaki R."/>
            <person name="Masui N."/>
            <person name="Fuji F."/>
            <person name="Hirama C."/>
            <person name="Nakamura Y."/>
            <person name="Ogasawara N."/>
            <person name="Kuhara S."/>
            <person name="Horikoshi K."/>
        </authorList>
    </citation>
    <scope>NUCLEOTIDE SEQUENCE [LARGE SCALE GENOMIC DNA]</scope>
    <source>
        <strain>ATCC BAA-125 / DSM 18197 / FERM 7344 / JCM 9153 / C-125</strain>
    </source>
</reference>
<organism>
    <name type="scientific">Halalkalibacterium halodurans (strain ATCC BAA-125 / DSM 18197 / FERM 7344 / JCM 9153 / C-125)</name>
    <name type="common">Bacillus halodurans</name>
    <dbReference type="NCBI Taxonomy" id="272558"/>
    <lineage>
        <taxon>Bacteria</taxon>
        <taxon>Bacillati</taxon>
        <taxon>Bacillota</taxon>
        <taxon>Bacilli</taxon>
        <taxon>Bacillales</taxon>
        <taxon>Bacillaceae</taxon>
        <taxon>Halalkalibacterium (ex Joshi et al. 2022)</taxon>
    </lineage>
</organism>
<proteinExistence type="evidence at protein level"/>
<evidence type="ECO:0000255" key="1">
    <source>
        <dbReference type="HAMAP-Rule" id="MF_01240"/>
    </source>
</evidence>
<evidence type="ECO:0007829" key="2">
    <source>
        <dbReference type="PDB" id="3CVJ"/>
    </source>
</evidence>